<accession>P36819</accession>
<proteinExistence type="inferred from homology"/>
<evidence type="ECO:0000255" key="1">
    <source>
        <dbReference type="HAMAP-Rule" id="MF_04004"/>
    </source>
</evidence>
<feature type="chain" id="PRO_0000133411" description="Protein E7">
    <location>
        <begin position="1"/>
        <end position="103"/>
    </location>
</feature>
<feature type="zinc finger region" evidence="1">
    <location>
        <begin position="56"/>
        <end position="94"/>
    </location>
</feature>
<feature type="region of interest" description="E7 terminal domain" evidence="1">
    <location>
        <begin position="1"/>
        <end position="47"/>
    </location>
</feature>
<feature type="short sequence motif" description="LXCXE motif; interaction with host RB1 and TMEM173/STING" evidence="1">
    <location>
        <begin position="27"/>
        <end position="31"/>
    </location>
</feature>
<feature type="short sequence motif" description="Nuclear export signal" evidence="1">
    <location>
        <begin position="76"/>
        <end position="84"/>
    </location>
</feature>
<gene>
    <name evidence="1" type="primary">E7</name>
</gene>
<organismHost>
    <name type="scientific">Homo sapiens</name>
    <name type="common">Human</name>
    <dbReference type="NCBI Taxonomy" id="9606"/>
</organismHost>
<name>VE7_HPV12</name>
<protein>
    <recommendedName>
        <fullName evidence="1">Protein E7</fullName>
    </recommendedName>
</protein>
<comment type="function">
    <text evidence="1">Plays a role in viral genome replication by driving entry of quiescent cells into the cell cycle. Stimulation of progression from G1 to S phase allows the virus to efficiently use the cellular DNA replicating machinery to achieve viral genome replication. E7 protein has both transforming and trans-activating activities. Induces the disassembly of the E2F1 transcription factor from RB1, with subsequent transcriptional activation of E2F1-regulated S-phase genes. Interferes with host histone deacetylation mediated by HDAC1 and HDAC2, leading to transcription activation. Also plays a role in the inhibition of both antiviral and antiproliferative functions of host interferon alpha. Interaction with host TMEM173/STING impairs the ability of TMEM173/STING to sense cytosolic DNA and promote the production of type I interferon (IFN-alpha and IFN-beta).</text>
</comment>
<comment type="subunit">
    <text evidence="1">Homodimer. Homooligomer. Interacts with host RB1; this interaction induces dissociation of RB1-E2F1 complex thereby disrupting RB1 activity. Interacts with host EP300; this interaction represses EP300 transcriptional activity. Interacts with protein E2; this interaction inhibits E7 oncogenic activity. Interacts with host TMEM173/STING; this interaction impairs the ability of TMEM173/STING to sense cytosolic DNA and promote the production of type I interferon (IFN-alpha and IFN-beta).</text>
</comment>
<comment type="subcellular location">
    <subcellularLocation>
        <location evidence="1">Host cytoplasm</location>
    </subcellularLocation>
    <subcellularLocation>
        <location evidence="1">Host nucleus</location>
    </subcellularLocation>
    <text evidence="1">Predominantly found in the host nucleus.</text>
</comment>
<comment type="domain">
    <text evidence="1">The E7 terminal domain is an intrinsically disordered domain, whose flexibility and conformational transitions confer target adaptability to the oncoprotein. It allows adaptation to a variety of protein targets and exposes the PEST degradation sequence that regulates its turnover in the cell.</text>
</comment>
<comment type="PTM">
    <text evidence="1">Highly phosphorylated.</text>
</comment>
<comment type="similarity">
    <text evidence="1">Belongs to the papillomaviridae E7 protein family.</text>
</comment>
<keyword id="KW-0010">Activator</keyword>
<keyword id="KW-0238">DNA-binding</keyword>
<keyword id="KW-0244">Early protein</keyword>
<keyword id="KW-1078">G1/S host cell cycle checkpoint dysregulation by virus</keyword>
<keyword id="KW-1035">Host cytoplasm</keyword>
<keyword id="KW-1048">Host nucleus</keyword>
<keyword id="KW-0945">Host-virus interaction</keyword>
<keyword id="KW-1090">Inhibition of host innate immune response by virus</keyword>
<keyword id="KW-1114">Inhibition of host interferon signaling pathway by virus</keyword>
<keyword id="KW-0922">Interferon antiviral system evasion</keyword>
<keyword id="KW-0479">Metal-binding</keyword>
<keyword id="KW-1121">Modulation of host cell cycle by virus</keyword>
<keyword id="KW-0553">Oncogene</keyword>
<keyword id="KW-0804">Transcription</keyword>
<keyword id="KW-0805">Transcription regulation</keyword>
<keyword id="KW-0899">Viral immunoevasion</keyword>
<keyword id="KW-0862">Zinc</keyword>
<keyword id="KW-0863">Zinc-finger</keyword>
<sequence length="103" mass="11500">MIGKEVTVQDFTLELSELQPEVLPVDLLCEEELPNEQETEEESDIDRTVFKIIAPCGCSSCEVNLRIFVNATDTGIRTLQDLLISDLQLLCPECRGNCKHGGF</sequence>
<organism>
    <name type="scientific">Human papillomavirus 12</name>
    <dbReference type="NCBI Taxonomy" id="10604"/>
    <lineage>
        <taxon>Viruses</taxon>
        <taxon>Monodnaviria</taxon>
        <taxon>Shotokuvirae</taxon>
        <taxon>Cossaviricota</taxon>
        <taxon>Papovaviricetes</taxon>
        <taxon>Zurhausenvirales</taxon>
        <taxon>Papillomaviridae</taxon>
        <taxon>Firstpapillomavirinae</taxon>
        <taxon>Betapapillomavirus</taxon>
        <taxon>Betapapillomavirus 1</taxon>
    </lineage>
</organism>
<reference key="1">
    <citation type="journal article" date="1994" name="Curr. Top. Microbiol. Immunol.">
        <title>Primer-directed sequencing of human papillomavirus types.</title>
        <authorList>
            <person name="Delius H."/>
            <person name="Hofmann B."/>
        </authorList>
    </citation>
    <scope>NUCLEOTIDE SEQUENCE [GENOMIC DNA]</scope>
</reference>
<reference key="2">
    <citation type="submission" date="1995-05" db="EMBL/GenBank/DDBJ databases">
        <authorList>
            <person name="Adachi A."/>
            <person name="Kiyono T."/>
            <person name="Ohashi M."/>
            <person name="Ishibashi M."/>
        </authorList>
    </citation>
    <scope>NUCLEOTIDE SEQUENCE [GENOMIC DNA]</scope>
</reference>
<reference key="3">
    <citation type="journal article" date="2002" name="Rev. Med. Virol.">
        <title>Interactions of SV40 large T antigen and other viral proteins with retinoblastoma tumour suppressor.</title>
        <authorList>
            <person name="Lee C."/>
            <person name="Cho Y."/>
        </authorList>
    </citation>
    <scope>REVIEW</scope>
</reference>
<dbReference type="EMBL" id="X74466">
    <property type="protein sequence ID" value="CAA52497.1"/>
    <property type="molecule type" value="Genomic_DNA"/>
</dbReference>
<dbReference type="EMBL" id="D50545">
    <property type="protein sequence ID" value="BAA09113.1"/>
    <property type="molecule type" value="Genomic_DNA"/>
</dbReference>
<dbReference type="PIR" id="S36539">
    <property type="entry name" value="S36539"/>
</dbReference>
<dbReference type="SMR" id="P36819"/>
<dbReference type="Proteomes" id="UP000009106">
    <property type="component" value="Genome"/>
</dbReference>
<dbReference type="GO" id="GO:0030430">
    <property type="term" value="C:host cell cytoplasm"/>
    <property type="evidence" value="ECO:0007669"/>
    <property type="project" value="UniProtKB-SubCell"/>
</dbReference>
<dbReference type="GO" id="GO:0042025">
    <property type="term" value="C:host cell nucleus"/>
    <property type="evidence" value="ECO:0007669"/>
    <property type="project" value="UniProtKB-SubCell"/>
</dbReference>
<dbReference type="GO" id="GO:0003677">
    <property type="term" value="F:DNA binding"/>
    <property type="evidence" value="ECO:0007669"/>
    <property type="project" value="UniProtKB-UniRule"/>
</dbReference>
<dbReference type="GO" id="GO:0003700">
    <property type="term" value="F:DNA-binding transcription factor activity"/>
    <property type="evidence" value="ECO:0007669"/>
    <property type="project" value="UniProtKB-UniRule"/>
</dbReference>
<dbReference type="GO" id="GO:0019904">
    <property type="term" value="F:protein domain specific binding"/>
    <property type="evidence" value="ECO:0007669"/>
    <property type="project" value="UniProtKB-UniRule"/>
</dbReference>
<dbReference type="GO" id="GO:0008270">
    <property type="term" value="F:zinc ion binding"/>
    <property type="evidence" value="ECO:0007669"/>
    <property type="project" value="UniProtKB-KW"/>
</dbReference>
<dbReference type="GO" id="GO:0006351">
    <property type="term" value="P:DNA-templated transcription"/>
    <property type="evidence" value="ECO:0007669"/>
    <property type="project" value="UniProtKB-UniRule"/>
</dbReference>
<dbReference type="GO" id="GO:0039645">
    <property type="term" value="P:symbiont-mediated perturbation of host cell cycle G1/S transition checkpoint"/>
    <property type="evidence" value="ECO:0007669"/>
    <property type="project" value="UniProtKB-UniRule"/>
</dbReference>
<dbReference type="GO" id="GO:0052170">
    <property type="term" value="P:symbiont-mediated suppression of host innate immune response"/>
    <property type="evidence" value="ECO:0007669"/>
    <property type="project" value="UniProtKB-KW"/>
</dbReference>
<dbReference type="GO" id="GO:0039502">
    <property type="term" value="P:symbiont-mediated suppression of host type I interferon-mediated signaling pathway"/>
    <property type="evidence" value="ECO:0007669"/>
    <property type="project" value="UniProtKB-UniRule"/>
</dbReference>
<dbReference type="Gene3D" id="3.30.160.330">
    <property type="match status" value="1"/>
</dbReference>
<dbReference type="HAMAP" id="MF_04004">
    <property type="entry name" value="PPV_E7"/>
    <property type="match status" value="1"/>
</dbReference>
<dbReference type="InterPro" id="IPR000148">
    <property type="entry name" value="Papilloma_E7"/>
</dbReference>
<dbReference type="Pfam" id="PF00527">
    <property type="entry name" value="E7"/>
    <property type="match status" value="1"/>
</dbReference>
<dbReference type="PIRSF" id="PIRSF003407">
    <property type="entry name" value="Papvi_E7"/>
    <property type="match status" value="1"/>
</dbReference>
<dbReference type="SUPFAM" id="SSF161234">
    <property type="entry name" value="E7 C-terminal domain-like"/>
    <property type="match status" value="1"/>
</dbReference>